<keyword id="KW-0025">Alternative splicing</keyword>
<keyword id="KW-0067">ATP-binding</keyword>
<keyword id="KW-0131">Cell cycle</keyword>
<keyword id="KW-0132">Cell division</keyword>
<keyword id="KW-1003">Cell membrane</keyword>
<keyword id="KW-0963">Cytoplasm</keyword>
<keyword id="KW-0418">Kinase</keyword>
<keyword id="KW-0472">Membrane</keyword>
<keyword id="KW-0547">Nucleotide-binding</keyword>
<keyword id="KW-0539">Nucleus</keyword>
<keyword id="KW-0597">Phosphoprotein</keyword>
<keyword id="KW-1185">Reference proteome</keyword>
<keyword id="KW-0723">Serine/threonine-protein kinase</keyword>
<keyword id="KW-0808">Transferase</keyword>
<keyword id="KW-0879">Wnt signaling pathway</keyword>
<protein>
    <recommendedName>
        <fullName>Cyclin-dependent kinase 14</fullName>
        <ecNumber>2.7.11.22</ecNumber>
    </recommendedName>
    <alternativeName>
        <fullName>Cell division protein kinase 14</fullName>
    </alternativeName>
    <alternativeName>
        <fullName>Serine/threonine-protein kinase PFTAIRE-1</fullName>
    </alternativeName>
</protein>
<gene>
    <name type="primary">Cdk14</name>
    <name type="synonym">Kiaa0834</name>
    <name type="synonym">Pftk1</name>
</gene>
<evidence type="ECO:0000250" key="1"/>
<evidence type="ECO:0000250" key="2">
    <source>
        <dbReference type="UniProtKB" id="O94921"/>
    </source>
</evidence>
<evidence type="ECO:0000255" key="3">
    <source>
        <dbReference type="PROSITE-ProRule" id="PRU00159"/>
    </source>
</evidence>
<evidence type="ECO:0000255" key="4">
    <source>
        <dbReference type="PROSITE-ProRule" id="PRU10027"/>
    </source>
</evidence>
<evidence type="ECO:0000256" key="5">
    <source>
        <dbReference type="SAM" id="MobiDB-lite"/>
    </source>
</evidence>
<evidence type="ECO:0000269" key="6">
    <source>
    </source>
</evidence>
<evidence type="ECO:0000269" key="7">
    <source>
    </source>
</evidence>
<evidence type="ECO:0000303" key="8">
    <source>
    </source>
</evidence>
<evidence type="ECO:0000303" key="9">
    <source>
    </source>
</evidence>
<evidence type="ECO:0000305" key="10"/>
<evidence type="ECO:0007744" key="11">
    <source>
    </source>
</evidence>
<feature type="chain" id="PRO_0000086507" description="Cyclin-dependent kinase 14">
    <location>
        <begin position="1"/>
        <end position="469"/>
    </location>
</feature>
<feature type="domain" description="Protein kinase" evidence="3">
    <location>
        <begin position="135"/>
        <end position="419"/>
    </location>
</feature>
<feature type="region of interest" description="Disordered" evidence="5">
    <location>
        <begin position="103"/>
        <end position="133"/>
    </location>
</feature>
<feature type="region of interest" description="Disordered" evidence="5">
    <location>
        <begin position="449"/>
        <end position="469"/>
    </location>
</feature>
<feature type="compositionally biased region" description="Polar residues" evidence="5">
    <location>
        <begin position="456"/>
        <end position="469"/>
    </location>
</feature>
<feature type="active site" description="Proton acceptor" evidence="3 4">
    <location>
        <position position="256"/>
    </location>
</feature>
<feature type="binding site" evidence="3">
    <location>
        <begin position="141"/>
        <end position="149"/>
    </location>
    <ligand>
        <name>ATP</name>
        <dbReference type="ChEBI" id="CHEBI:30616"/>
    </ligand>
</feature>
<feature type="binding site" evidence="3">
    <location>
        <position position="164"/>
    </location>
    <ligand>
        <name>ATP</name>
        <dbReference type="ChEBI" id="CHEBI:30616"/>
    </ligand>
</feature>
<feature type="modified residue" description="Phosphoserine" evidence="2">
    <location>
        <position position="24"/>
    </location>
</feature>
<feature type="modified residue" description="Phosphoserine" evidence="2">
    <location>
        <position position="78"/>
    </location>
</feature>
<feature type="modified residue" description="Phosphoserine" evidence="11">
    <location>
        <position position="95"/>
    </location>
</feature>
<feature type="modified residue" description="Phosphoserine" evidence="2">
    <location>
        <position position="134"/>
    </location>
</feature>
<feature type="splice variant" id="VSP_038763" description="In isoform 2." evidence="8 9">
    <location>
        <begin position="1"/>
        <end position="46"/>
    </location>
</feature>
<feature type="splice variant" id="VSP_038764" description="In isoform 3." evidence="8">
    <original>LGTPNEDTWPGVHSLPHFKPERFTVYSSKSLRQAWNKLSYVNHAEDLASKLLQCSPKNRLSAQAALSHEYFSDLPPRLWELTDMSSIFTVPNVRLQPEAGESMRAFGKNNSYGKSLSNSKH</original>
    <variation>SSAQSASQKNLFLISYLVT</variation>
    <location>
        <begin position="349"/>
        <end position="469"/>
    </location>
</feature>
<feature type="sequence conflict" description="In Ref. 3; BAE38049." evidence="10" ref="3">
    <original>Q</original>
    <variation>R</variation>
    <location>
        <position position="219"/>
    </location>
</feature>
<feature type="sequence conflict" description="In Ref. 1; AAB87504." evidence="10" ref="1">
    <original>DK</original>
    <variation>EQ</variation>
    <location>
        <begin position="222"/>
        <end position="223"/>
    </location>
</feature>
<feature type="sequence conflict" description="In Ref. 2; AAB70455." evidence="10" ref="2">
    <original>S</original>
    <variation>N</variation>
    <location>
        <position position="375"/>
    </location>
</feature>
<sequence length="469" mass="52996">MCDLIEPQPAEKIGKMKKLRRTLSESFSRIALKKEDTTFDEICVTKMSTRNCQGTDSVIKHLDTIPEDKKVRVQRTQSTFDPFEKPANQVKRVHSENNACINFKSSSAGKESPKVRRHSSPSSPTSPKFGKADSYEKLEKLGEGSYATVYKGKSKVNGKLVALKVIRLQEEEGTPFTAIREASLLKGLKHANIVLLHDIIHTKETLTLVFEYVHTDLCQYMDKHPGGLHPDNVKLFLFQLLRGLSYIHQRYILHRDLKPQNLLISDTGELKLADFGLARAKSVPSHTYSNEVVTLWYRPPDVLLGSTEYSTCLDMWGVGCIFVEMIQGVAAFPGMKDIQDQLERIFLVLGTPNEDTWPGVHSLPHFKPERFTVYSSKSLRQAWNKLSYVNHAEDLASKLLQCSPKNRLSAQAALSHEYFSDLPPRLWELTDMSSIFTVPNVRLQPEAGESMRAFGKNNSYGKSLSNSKH</sequence>
<reference key="1">
    <citation type="journal article" date="1998" name="Mol. Reprod. Dev.">
        <title>The identification and characterization of expression of Pftaire-1, a novel Cdk family member, suggest its function in the mouse testis and nervous system.</title>
        <authorList>
            <person name="Besset V."/>
            <person name="Rhee K."/>
            <person name="Wolgemuth D.J."/>
        </authorList>
    </citation>
    <scope>NUCLEOTIDE SEQUENCE [MRNA] (ISOFORM 1)</scope>
    <scope>FUNCTION</scope>
    <scope>SUBCELLULAR LOCATION</scope>
    <scope>TISSUE SPECIFICITY</scope>
    <scope>DEVELOPMENTAL STAGE</scope>
    <source>
        <tissue>Testis</tissue>
    </source>
</reference>
<reference key="2">
    <citation type="journal article" date="1997" name="J. Neurochem.">
        <title>A novel cdc2-related protein kinase expressed in the nervous system.</title>
        <authorList>
            <person name="Lazzaro M.A."/>
            <person name="Albert P.R."/>
            <person name="Julien J.-P."/>
        </authorList>
    </citation>
    <scope>NUCLEOTIDE SEQUENCE [MRNA] (ISOFORM 2)</scope>
    <scope>SUBCELLULAR LOCATION</scope>
    <scope>DEVELOPMENTAL STAGE</scope>
    <source>
        <strain>NIH Swiss</strain>
        <tissue>Brain</tissue>
    </source>
</reference>
<reference key="3">
    <citation type="journal article" date="2005" name="Science">
        <title>The transcriptional landscape of the mammalian genome.</title>
        <authorList>
            <person name="Carninci P."/>
            <person name="Kasukawa T."/>
            <person name="Katayama S."/>
            <person name="Gough J."/>
            <person name="Frith M.C."/>
            <person name="Maeda N."/>
            <person name="Oyama R."/>
            <person name="Ravasi T."/>
            <person name="Lenhard B."/>
            <person name="Wells C."/>
            <person name="Kodzius R."/>
            <person name="Shimokawa K."/>
            <person name="Bajic V.B."/>
            <person name="Brenner S.E."/>
            <person name="Batalov S."/>
            <person name="Forrest A.R."/>
            <person name="Zavolan M."/>
            <person name="Davis M.J."/>
            <person name="Wilming L.G."/>
            <person name="Aidinis V."/>
            <person name="Allen J.E."/>
            <person name="Ambesi-Impiombato A."/>
            <person name="Apweiler R."/>
            <person name="Aturaliya R.N."/>
            <person name="Bailey T.L."/>
            <person name="Bansal M."/>
            <person name="Baxter L."/>
            <person name="Beisel K.W."/>
            <person name="Bersano T."/>
            <person name="Bono H."/>
            <person name="Chalk A.M."/>
            <person name="Chiu K.P."/>
            <person name="Choudhary V."/>
            <person name="Christoffels A."/>
            <person name="Clutterbuck D.R."/>
            <person name="Crowe M.L."/>
            <person name="Dalla E."/>
            <person name="Dalrymple B.P."/>
            <person name="de Bono B."/>
            <person name="Della Gatta G."/>
            <person name="di Bernardo D."/>
            <person name="Down T."/>
            <person name="Engstrom P."/>
            <person name="Fagiolini M."/>
            <person name="Faulkner G."/>
            <person name="Fletcher C.F."/>
            <person name="Fukushima T."/>
            <person name="Furuno M."/>
            <person name="Futaki S."/>
            <person name="Gariboldi M."/>
            <person name="Georgii-Hemming P."/>
            <person name="Gingeras T.R."/>
            <person name="Gojobori T."/>
            <person name="Green R.E."/>
            <person name="Gustincich S."/>
            <person name="Harbers M."/>
            <person name="Hayashi Y."/>
            <person name="Hensch T.K."/>
            <person name="Hirokawa N."/>
            <person name="Hill D."/>
            <person name="Huminiecki L."/>
            <person name="Iacono M."/>
            <person name="Ikeo K."/>
            <person name="Iwama A."/>
            <person name="Ishikawa T."/>
            <person name="Jakt M."/>
            <person name="Kanapin A."/>
            <person name="Katoh M."/>
            <person name="Kawasawa Y."/>
            <person name="Kelso J."/>
            <person name="Kitamura H."/>
            <person name="Kitano H."/>
            <person name="Kollias G."/>
            <person name="Krishnan S.P."/>
            <person name="Kruger A."/>
            <person name="Kummerfeld S.K."/>
            <person name="Kurochkin I.V."/>
            <person name="Lareau L.F."/>
            <person name="Lazarevic D."/>
            <person name="Lipovich L."/>
            <person name="Liu J."/>
            <person name="Liuni S."/>
            <person name="McWilliam S."/>
            <person name="Madan Babu M."/>
            <person name="Madera M."/>
            <person name="Marchionni L."/>
            <person name="Matsuda H."/>
            <person name="Matsuzawa S."/>
            <person name="Miki H."/>
            <person name="Mignone F."/>
            <person name="Miyake S."/>
            <person name="Morris K."/>
            <person name="Mottagui-Tabar S."/>
            <person name="Mulder N."/>
            <person name="Nakano N."/>
            <person name="Nakauchi H."/>
            <person name="Ng P."/>
            <person name="Nilsson R."/>
            <person name="Nishiguchi S."/>
            <person name="Nishikawa S."/>
            <person name="Nori F."/>
            <person name="Ohara O."/>
            <person name="Okazaki Y."/>
            <person name="Orlando V."/>
            <person name="Pang K.C."/>
            <person name="Pavan W.J."/>
            <person name="Pavesi G."/>
            <person name="Pesole G."/>
            <person name="Petrovsky N."/>
            <person name="Piazza S."/>
            <person name="Reed J."/>
            <person name="Reid J.F."/>
            <person name="Ring B.Z."/>
            <person name="Ringwald M."/>
            <person name="Rost B."/>
            <person name="Ruan Y."/>
            <person name="Salzberg S.L."/>
            <person name="Sandelin A."/>
            <person name="Schneider C."/>
            <person name="Schoenbach C."/>
            <person name="Sekiguchi K."/>
            <person name="Semple C.A."/>
            <person name="Seno S."/>
            <person name="Sessa L."/>
            <person name="Sheng Y."/>
            <person name="Shibata Y."/>
            <person name="Shimada H."/>
            <person name="Shimada K."/>
            <person name="Silva D."/>
            <person name="Sinclair B."/>
            <person name="Sperling S."/>
            <person name="Stupka E."/>
            <person name="Sugiura K."/>
            <person name="Sultana R."/>
            <person name="Takenaka Y."/>
            <person name="Taki K."/>
            <person name="Tammoja K."/>
            <person name="Tan S.L."/>
            <person name="Tang S."/>
            <person name="Taylor M.S."/>
            <person name="Tegner J."/>
            <person name="Teichmann S.A."/>
            <person name="Ueda H.R."/>
            <person name="van Nimwegen E."/>
            <person name="Verardo R."/>
            <person name="Wei C.L."/>
            <person name="Yagi K."/>
            <person name="Yamanishi H."/>
            <person name="Zabarovsky E."/>
            <person name="Zhu S."/>
            <person name="Zimmer A."/>
            <person name="Hide W."/>
            <person name="Bult C."/>
            <person name="Grimmond S.M."/>
            <person name="Teasdale R.D."/>
            <person name="Liu E.T."/>
            <person name="Brusic V."/>
            <person name="Quackenbush J."/>
            <person name="Wahlestedt C."/>
            <person name="Mattick J.S."/>
            <person name="Hume D.A."/>
            <person name="Kai C."/>
            <person name="Sasaki D."/>
            <person name="Tomaru Y."/>
            <person name="Fukuda S."/>
            <person name="Kanamori-Katayama M."/>
            <person name="Suzuki M."/>
            <person name="Aoki J."/>
            <person name="Arakawa T."/>
            <person name="Iida J."/>
            <person name="Imamura K."/>
            <person name="Itoh M."/>
            <person name="Kato T."/>
            <person name="Kawaji H."/>
            <person name="Kawagashira N."/>
            <person name="Kawashima T."/>
            <person name="Kojima M."/>
            <person name="Kondo S."/>
            <person name="Konno H."/>
            <person name="Nakano K."/>
            <person name="Ninomiya N."/>
            <person name="Nishio T."/>
            <person name="Okada M."/>
            <person name="Plessy C."/>
            <person name="Shibata K."/>
            <person name="Shiraki T."/>
            <person name="Suzuki S."/>
            <person name="Tagami M."/>
            <person name="Waki K."/>
            <person name="Watahiki A."/>
            <person name="Okamura-Oho Y."/>
            <person name="Suzuki H."/>
            <person name="Kawai J."/>
            <person name="Hayashizaki Y."/>
        </authorList>
    </citation>
    <scope>NUCLEOTIDE SEQUENCE [LARGE SCALE MRNA] (ISOFORMS 2 AND 3)</scope>
    <source>
        <strain>C57BL/6J</strain>
        <tissue>Olfactory bulb</tissue>
    </source>
</reference>
<reference key="4">
    <citation type="journal article" date="2003" name="DNA Res.">
        <title>Prediction of the coding sequences of mouse homologues of KIAA gene: III. The complete nucleotide sequences of 500 mouse KIAA-homologous cDNAs identified by screening of terminal sequences of cDNA clones randomly sampled from size-fractionated libraries.</title>
        <authorList>
            <person name="Okazaki N."/>
            <person name="Kikuno R."/>
            <person name="Ohara R."/>
            <person name="Inamoto S."/>
            <person name="Koseki H."/>
            <person name="Hiraoka S."/>
            <person name="Saga Y."/>
            <person name="Nagase T."/>
            <person name="Ohara O."/>
            <person name="Koga H."/>
        </authorList>
    </citation>
    <scope>NUCLEOTIDE SEQUENCE [LARGE SCALE MRNA] OF 17-469 (ISOFORM 1)</scope>
    <source>
        <tissue>Embryonic tail</tissue>
    </source>
</reference>
<reference key="5">
    <citation type="journal article" date="2010" name="Cell">
        <title>A tissue-specific atlas of mouse protein phosphorylation and expression.</title>
        <authorList>
            <person name="Huttlin E.L."/>
            <person name="Jedrychowski M.P."/>
            <person name="Elias J.E."/>
            <person name="Goswami T."/>
            <person name="Rad R."/>
            <person name="Beausoleil S.A."/>
            <person name="Villen J."/>
            <person name="Haas W."/>
            <person name="Sowa M.E."/>
            <person name="Gygi S.P."/>
        </authorList>
    </citation>
    <scope>PHOSPHORYLATION [LARGE SCALE ANALYSIS] AT SER-95</scope>
    <scope>IDENTIFICATION BY MASS SPECTROMETRY [LARGE SCALE ANALYSIS]</scope>
    <source>
        <tissue>Brain</tissue>
    </source>
</reference>
<organism>
    <name type="scientific">Mus musculus</name>
    <name type="common">Mouse</name>
    <dbReference type="NCBI Taxonomy" id="10090"/>
    <lineage>
        <taxon>Eukaryota</taxon>
        <taxon>Metazoa</taxon>
        <taxon>Chordata</taxon>
        <taxon>Craniata</taxon>
        <taxon>Vertebrata</taxon>
        <taxon>Euteleostomi</taxon>
        <taxon>Mammalia</taxon>
        <taxon>Eutheria</taxon>
        <taxon>Euarchontoglires</taxon>
        <taxon>Glires</taxon>
        <taxon>Rodentia</taxon>
        <taxon>Myomorpha</taxon>
        <taxon>Muroidea</taxon>
        <taxon>Muridae</taxon>
        <taxon>Murinae</taxon>
        <taxon>Mus</taxon>
        <taxon>Mus</taxon>
    </lineage>
</organism>
<comment type="function">
    <text evidence="1 7">Serine/threonine-protein kinase involved in the control of the eukaryotic cell cycle, whose activity is controlled by an associated cyclin. Acts as a cell-cycle regulator of Wnt signaling pathway during G2/M phase by mediating the phosphorylation of LRP6 at 'Ser-1490', leading to the activation of the Wnt signaling pathway. Acts as a regulator of cell cycle progression and cell proliferation via its interaction with CCDN3. Phosphorylates RB1 in vitro, however the relevance of such result remains to be confirmed in vivo. May also play a role in meiosis, neuron differentiation and may indirectly act as a negative regulator of insulin-responsive glucose transport (By similarity).</text>
</comment>
<comment type="catalytic activity">
    <reaction>
        <text>L-seryl-[protein] + ATP = O-phospho-L-seryl-[protein] + ADP + H(+)</text>
        <dbReference type="Rhea" id="RHEA:17989"/>
        <dbReference type="Rhea" id="RHEA-COMP:9863"/>
        <dbReference type="Rhea" id="RHEA-COMP:11604"/>
        <dbReference type="ChEBI" id="CHEBI:15378"/>
        <dbReference type="ChEBI" id="CHEBI:29999"/>
        <dbReference type="ChEBI" id="CHEBI:30616"/>
        <dbReference type="ChEBI" id="CHEBI:83421"/>
        <dbReference type="ChEBI" id="CHEBI:456216"/>
        <dbReference type="EC" id="2.7.11.22"/>
    </reaction>
</comment>
<comment type="catalytic activity">
    <reaction>
        <text>L-threonyl-[protein] + ATP = O-phospho-L-threonyl-[protein] + ADP + H(+)</text>
        <dbReference type="Rhea" id="RHEA:46608"/>
        <dbReference type="Rhea" id="RHEA-COMP:11060"/>
        <dbReference type="Rhea" id="RHEA-COMP:11605"/>
        <dbReference type="ChEBI" id="CHEBI:15378"/>
        <dbReference type="ChEBI" id="CHEBI:30013"/>
        <dbReference type="ChEBI" id="CHEBI:30616"/>
        <dbReference type="ChEBI" id="CHEBI:61977"/>
        <dbReference type="ChEBI" id="CHEBI:456216"/>
        <dbReference type="EC" id="2.7.11.22"/>
    </reaction>
</comment>
<comment type="activity regulation">
    <text evidence="1">Serine/threonine-protein kinase activity is promoted by associated cyclins CCDN3 and CCNY and repressed by CDKN1A.</text>
</comment>
<comment type="subunit">
    <text evidence="2">Found in a complex with LRP6, CCNY and CAPRIN2 during G2/M stage; CAPRIN2 functions as a scaffold for the complex by binding to CCNY via its N terminus and to CDK14 via its C terminus. Interacts with CCNY; CCNY mediates its recruitment to the plasma membrane and promotes phosphorylation of LRP6. Interacts with CCDN3 and CDKN1A. Interacts with SEPT8. Interacts with 14-3-3 proteina YWHAB, YWHAE, YWHAH and YWHAQ.</text>
</comment>
<comment type="subcellular location">
    <subcellularLocation>
        <location evidence="1">Cell membrane</location>
        <topology evidence="1">Peripheral membrane protein</topology>
    </subcellularLocation>
    <subcellularLocation>
        <location>Cytoplasm</location>
    </subcellularLocation>
    <subcellularLocation>
        <location>Nucleus</location>
    </subcellularLocation>
    <text evidence="1">Recruited to the cell membrane by CCNY.</text>
</comment>
<comment type="alternative products">
    <event type="alternative splicing"/>
    <isoform>
        <id>O35495-1</id>
        <name>1</name>
        <sequence type="displayed"/>
    </isoform>
    <isoform>
        <id>O35495-2</id>
        <name>2</name>
        <sequence type="described" ref="VSP_038763"/>
    </isoform>
    <isoform>
        <id>O35495-3</id>
        <name>3</name>
        <sequence type="described" ref="VSP_038764"/>
    </isoform>
</comment>
<comment type="tissue specificity">
    <text evidence="7">In the adult, widely expressed at low levels except in brain, kidney and testis where expression is high. In the brain, detected in cortex, hippocampus, dentate gyrus, amygdala cortex, parasubiculum and cerebellum. In the embryo, expressed predominantly in the nervous system.</text>
</comment>
<comment type="developmental stage">
    <text evidence="6 7">In the testis, expressed at low levels in Sertoli cells of 7-day-old mice, barely detected at day 17, and detected at much higher levels in late pachytene/diplotene spermatocytes in the adult. In the nervous system, expressed at highest levels in the adult.</text>
</comment>
<comment type="similarity">
    <text evidence="10">Belongs to the protein kinase superfamily. CMGC Ser/Thr protein kinase family. CDC2/CDKX subfamily.</text>
</comment>
<accession>O35495</accession>
<accession>O35848</accession>
<accession>Q3TNN9</accession>
<accession>Q3V319</accession>
<accession>Q6ZQ37</accession>
<name>CDK14_MOUSE</name>
<proteinExistence type="evidence at protein level"/>
<dbReference type="EC" id="2.7.11.22"/>
<dbReference type="EMBL" id="AF033655">
    <property type="protein sequence ID" value="AAB87504.1"/>
    <property type="molecule type" value="mRNA"/>
</dbReference>
<dbReference type="EMBL" id="U62391">
    <property type="protein sequence ID" value="AAB70455.1"/>
    <property type="molecule type" value="mRNA"/>
</dbReference>
<dbReference type="EMBL" id="AK165149">
    <property type="protein sequence ID" value="BAE38049.1"/>
    <property type="molecule type" value="mRNA"/>
</dbReference>
<dbReference type="EMBL" id="AK051283">
    <property type="protein sequence ID" value="BAE43346.1"/>
    <property type="molecule type" value="mRNA"/>
</dbReference>
<dbReference type="EMBL" id="AK129226">
    <property type="protein sequence ID" value="BAC98036.1"/>
    <property type="molecule type" value="mRNA"/>
</dbReference>
<dbReference type="CCDS" id="CCDS19073.1">
    <molecule id="O35495-1"/>
</dbReference>
<dbReference type="CCDS" id="CCDS80203.1">
    <molecule id="O35495-2"/>
</dbReference>
<dbReference type="RefSeq" id="NP_001297377.1">
    <molecule id="O35495-2"/>
    <property type="nucleotide sequence ID" value="NM_001310448.2"/>
</dbReference>
<dbReference type="RefSeq" id="NP_001411391.1">
    <molecule id="O35495-2"/>
    <property type="nucleotide sequence ID" value="NM_001424462.1"/>
</dbReference>
<dbReference type="RefSeq" id="NP_001411392.1">
    <molecule id="O35495-2"/>
    <property type="nucleotide sequence ID" value="NM_001424463.1"/>
</dbReference>
<dbReference type="RefSeq" id="NP_035204.2">
    <molecule id="O35495-1"/>
    <property type="nucleotide sequence ID" value="NM_011074.4"/>
</dbReference>
<dbReference type="RefSeq" id="XP_017176197.1">
    <molecule id="O35495-2"/>
    <property type="nucleotide sequence ID" value="XM_017320708.1"/>
</dbReference>
<dbReference type="RefSeq" id="XP_036020765.1">
    <molecule id="O35495-2"/>
    <property type="nucleotide sequence ID" value="XM_036164872.1"/>
</dbReference>
<dbReference type="SMR" id="O35495"/>
<dbReference type="BioGRID" id="202129">
    <property type="interactions" value="9"/>
</dbReference>
<dbReference type="ComplexPortal" id="CPX-367">
    <property type="entry name" value="Cyclin Y-Cdk14 complex"/>
</dbReference>
<dbReference type="FunCoup" id="O35495">
    <property type="interactions" value="2670"/>
</dbReference>
<dbReference type="IntAct" id="O35495">
    <property type="interactions" value="1"/>
</dbReference>
<dbReference type="MINT" id="O35495"/>
<dbReference type="STRING" id="10090.ENSMUSP00000030763"/>
<dbReference type="iPTMnet" id="O35495"/>
<dbReference type="PhosphoSitePlus" id="O35495"/>
<dbReference type="jPOST" id="O35495"/>
<dbReference type="PaxDb" id="10090-ENSMUSP00000030763"/>
<dbReference type="PeptideAtlas" id="O35495"/>
<dbReference type="ProteomicsDB" id="281287">
    <molecule id="O35495-1"/>
</dbReference>
<dbReference type="ProteomicsDB" id="281288">
    <molecule id="O35495-2"/>
</dbReference>
<dbReference type="ProteomicsDB" id="281289">
    <molecule id="O35495-3"/>
</dbReference>
<dbReference type="Pumba" id="O35495"/>
<dbReference type="Antibodypedia" id="15462">
    <property type="antibodies" value="236 antibodies from 28 providers"/>
</dbReference>
<dbReference type="DNASU" id="18647"/>
<dbReference type="Ensembl" id="ENSMUST00000030763.13">
    <molecule id="O35495-1"/>
    <property type="protein sequence ID" value="ENSMUSP00000030763.7"/>
    <property type="gene ID" value="ENSMUSG00000028926.16"/>
</dbReference>
<dbReference type="Ensembl" id="ENSMUST00000115450.8">
    <molecule id="O35495-2"/>
    <property type="protein sequence ID" value="ENSMUSP00000111110.2"/>
    <property type="gene ID" value="ENSMUSG00000028926.16"/>
</dbReference>
<dbReference type="Ensembl" id="ENSMUST00000115451.8">
    <molecule id="O35495-2"/>
    <property type="protein sequence ID" value="ENSMUSP00000111111.2"/>
    <property type="gene ID" value="ENSMUSG00000028926.16"/>
</dbReference>
<dbReference type="GeneID" id="18647"/>
<dbReference type="KEGG" id="mmu:18647"/>
<dbReference type="UCSC" id="uc008wih.2">
    <molecule id="O35495-1"/>
    <property type="organism name" value="mouse"/>
</dbReference>
<dbReference type="UCSC" id="uc008wik.2">
    <molecule id="O35495-3"/>
    <property type="organism name" value="mouse"/>
</dbReference>
<dbReference type="AGR" id="MGI:894318"/>
<dbReference type="CTD" id="5218"/>
<dbReference type="MGI" id="MGI:894318">
    <property type="gene designation" value="Cdk14"/>
</dbReference>
<dbReference type="VEuPathDB" id="HostDB:ENSMUSG00000028926"/>
<dbReference type="eggNOG" id="KOG0594">
    <property type="taxonomic scope" value="Eukaryota"/>
</dbReference>
<dbReference type="GeneTree" id="ENSGT00940000157640"/>
<dbReference type="HOGENOM" id="CLU_000288_181_6_1"/>
<dbReference type="InParanoid" id="O35495"/>
<dbReference type="OMA" id="MCDLLDS"/>
<dbReference type="OrthoDB" id="1732493at2759"/>
<dbReference type="PhylomeDB" id="O35495"/>
<dbReference type="TreeFam" id="TF106508"/>
<dbReference type="BioGRID-ORCS" id="18647">
    <property type="hits" value="2 hits in 81 CRISPR screens"/>
</dbReference>
<dbReference type="ChiTaRS" id="Cdk14">
    <property type="organism name" value="mouse"/>
</dbReference>
<dbReference type="PRO" id="PR:O35495"/>
<dbReference type="Proteomes" id="UP000000589">
    <property type="component" value="Chromosome 5"/>
</dbReference>
<dbReference type="RNAct" id="O35495">
    <property type="molecule type" value="protein"/>
</dbReference>
<dbReference type="Bgee" id="ENSMUSG00000028926">
    <property type="expression patterns" value="Expressed in cingulate cortex and 270 other cell types or tissues"/>
</dbReference>
<dbReference type="ExpressionAtlas" id="O35495">
    <property type="expression patterns" value="baseline and differential"/>
</dbReference>
<dbReference type="GO" id="GO:0000307">
    <property type="term" value="C:cyclin-dependent protein kinase holoenzyme complex"/>
    <property type="evidence" value="ECO:0000353"/>
    <property type="project" value="ComplexPortal"/>
</dbReference>
<dbReference type="GO" id="GO:0005737">
    <property type="term" value="C:cytoplasm"/>
    <property type="evidence" value="ECO:0000314"/>
    <property type="project" value="MGI"/>
</dbReference>
<dbReference type="GO" id="GO:0000308">
    <property type="term" value="C:cytoplasmic cyclin-dependent protein kinase holoenzyme complex"/>
    <property type="evidence" value="ECO:0000250"/>
    <property type="project" value="UniProtKB"/>
</dbReference>
<dbReference type="GO" id="GO:0005829">
    <property type="term" value="C:cytosol"/>
    <property type="evidence" value="ECO:0000314"/>
    <property type="project" value="MGI"/>
</dbReference>
<dbReference type="GO" id="GO:0005654">
    <property type="term" value="C:nucleoplasm"/>
    <property type="evidence" value="ECO:0007669"/>
    <property type="project" value="Ensembl"/>
</dbReference>
<dbReference type="GO" id="GO:0005634">
    <property type="term" value="C:nucleus"/>
    <property type="evidence" value="ECO:0000314"/>
    <property type="project" value="MGI"/>
</dbReference>
<dbReference type="GO" id="GO:0005886">
    <property type="term" value="C:plasma membrane"/>
    <property type="evidence" value="ECO:0000250"/>
    <property type="project" value="UniProtKB"/>
</dbReference>
<dbReference type="GO" id="GO:0005524">
    <property type="term" value="F:ATP binding"/>
    <property type="evidence" value="ECO:0007669"/>
    <property type="project" value="UniProtKB-KW"/>
</dbReference>
<dbReference type="GO" id="GO:0030332">
    <property type="term" value="F:cyclin binding"/>
    <property type="evidence" value="ECO:0007669"/>
    <property type="project" value="Ensembl"/>
</dbReference>
<dbReference type="GO" id="GO:0004693">
    <property type="term" value="F:cyclin-dependent protein serine/threonine kinase activity"/>
    <property type="evidence" value="ECO:0000250"/>
    <property type="project" value="UniProtKB"/>
</dbReference>
<dbReference type="GO" id="GO:0004672">
    <property type="term" value="F:protein kinase activity"/>
    <property type="evidence" value="ECO:0000314"/>
    <property type="project" value="MGI"/>
</dbReference>
<dbReference type="GO" id="GO:0106310">
    <property type="term" value="F:protein serine kinase activity"/>
    <property type="evidence" value="ECO:0007669"/>
    <property type="project" value="RHEA"/>
</dbReference>
<dbReference type="GO" id="GO:0004674">
    <property type="term" value="F:protein serine/threonine kinase activity"/>
    <property type="evidence" value="ECO:0000250"/>
    <property type="project" value="MGI"/>
</dbReference>
<dbReference type="GO" id="GO:0051301">
    <property type="term" value="P:cell division"/>
    <property type="evidence" value="ECO:0007669"/>
    <property type="project" value="UniProtKB-KW"/>
</dbReference>
<dbReference type="GO" id="GO:0000086">
    <property type="term" value="P:G2/M transition of mitotic cell cycle"/>
    <property type="evidence" value="ECO:0000250"/>
    <property type="project" value="UniProtKB"/>
</dbReference>
<dbReference type="GO" id="GO:0060828">
    <property type="term" value="P:regulation of canonical Wnt signaling pathway"/>
    <property type="evidence" value="ECO:0000250"/>
    <property type="project" value="UniProtKB"/>
</dbReference>
<dbReference type="GO" id="GO:0016055">
    <property type="term" value="P:Wnt signaling pathway"/>
    <property type="evidence" value="ECO:0007669"/>
    <property type="project" value="UniProtKB-KW"/>
</dbReference>
<dbReference type="CDD" id="cd07869">
    <property type="entry name" value="STKc_PFTAIRE1"/>
    <property type="match status" value="1"/>
</dbReference>
<dbReference type="FunFam" id="1.10.510.10:FF:000131">
    <property type="entry name" value="cyclin-dependent kinase 14 isoform X1"/>
    <property type="match status" value="1"/>
</dbReference>
<dbReference type="FunFam" id="3.30.200.20:FF:000007">
    <property type="entry name" value="Cyclin-dependent kinase 14, putative"/>
    <property type="match status" value="1"/>
</dbReference>
<dbReference type="Gene3D" id="3.30.200.20">
    <property type="entry name" value="Phosphorylase Kinase, domain 1"/>
    <property type="match status" value="1"/>
</dbReference>
<dbReference type="Gene3D" id="1.10.510.10">
    <property type="entry name" value="Transferase(Phosphotransferase) domain 1"/>
    <property type="match status" value="1"/>
</dbReference>
<dbReference type="InterPro" id="IPR050108">
    <property type="entry name" value="CDK"/>
</dbReference>
<dbReference type="InterPro" id="IPR011009">
    <property type="entry name" value="Kinase-like_dom_sf"/>
</dbReference>
<dbReference type="InterPro" id="IPR000719">
    <property type="entry name" value="Prot_kinase_dom"/>
</dbReference>
<dbReference type="InterPro" id="IPR017441">
    <property type="entry name" value="Protein_kinase_ATP_BS"/>
</dbReference>
<dbReference type="InterPro" id="IPR008271">
    <property type="entry name" value="Ser/Thr_kinase_AS"/>
</dbReference>
<dbReference type="PANTHER" id="PTHR24056">
    <property type="entry name" value="CELL DIVISION PROTEIN KINASE"/>
    <property type="match status" value="1"/>
</dbReference>
<dbReference type="PANTHER" id="PTHR24056:SF154">
    <property type="entry name" value="CYCLIN-DEPENDENT KINASE 14"/>
    <property type="match status" value="1"/>
</dbReference>
<dbReference type="Pfam" id="PF00069">
    <property type="entry name" value="Pkinase"/>
    <property type="match status" value="1"/>
</dbReference>
<dbReference type="SMART" id="SM00220">
    <property type="entry name" value="S_TKc"/>
    <property type="match status" value="1"/>
</dbReference>
<dbReference type="SUPFAM" id="SSF56112">
    <property type="entry name" value="Protein kinase-like (PK-like)"/>
    <property type="match status" value="1"/>
</dbReference>
<dbReference type="PROSITE" id="PS00107">
    <property type="entry name" value="PROTEIN_KINASE_ATP"/>
    <property type="match status" value="1"/>
</dbReference>
<dbReference type="PROSITE" id="PS50011">
    <property type="entry name" value="PROTEIN_KINASE_DOM"/>
    <property type="match status" value="1"/>
</dbReference>
<dbReference type="PROSITE" id="PS00108">
    <property type="entry name" value="PROTEIN_KINASE_ST"/>
    <property type="match status" value="1"/>
</dbReference>